<proteinExistence type="inferred from homology"/>
<keyword id="KW-0963">Cytoplasm</keyword>
<keyword id="KW-0444">Lipid biosynthesis</keyword>
<keyword id="KW-0443">Lipid metabolism</keyword>
<keyword id="KW-0479">Metal-binding</keyword>
<keyword id="KW-0520">NAD</keyword>
<keyword id="KW-0521">NADP</keyword>
<keyword id="KW-0560">Oxidoreductase</keyword>
<keyword id="KW-0594">Phospholipid biosynthesis</keyword>
<keyword id="KW-1208">Phospholipid metabolism</keyword>
<keyword id="KW-1185">Reference proteome</keyword>
<keyword id="KW-0862">Zinc</keyword>
<accession>Q6M0P4</accession>
<feature type="chain" id="PRO_0000350657" description="Glycerol-1-phosphate dehydrogenase [NAD(P)+]">
    <location>
        <begin position="1"/>
        <end position="334"/>
    </location>
</feature>
<feature type="binding site" evidence="1">
    <location>
        <begin position="77"/>
        <end position="81"/>
    </location>
    <ligand>
        <name>NAD(+)</name>
        <dbReference type="ChEBI" id="CHEBI:57540"/>
    </ligand>
</feature>
<feature type="binding site" evidence="1">
    <location>
        <begin position="99"/>
        <end position="102"/>
    </location>
    <ligand>
        <name>NAD(+)</name>
        <dbReference type="ChEBI" id="CHEBI:57540"/>
    </ligand>
</feature>
<feature type="binding site" evidence="1">
    <location>
        <position position="104"/>
    </location>
    <ligand>
        <name>substrate</name>
    </ligand>
</feature>
<feature type="binding site" evidence="1">
    <location>
        <position position="108"/>
    </location>
    <ligand>
        <name>NAD(+)</name>
        <dbReference type="ChEBI" id="CHEBI:57540"/>
    </ligand>
</feature>
<feature type="binding site" evidence="1">
    <location>
        <position position="147"/>
    </location>
    <ligand>
        <name>substrate</name>
    </ligand>
</feature>
<feature type="binding site" evidence="1">
    <location>
        <position position="147"/>
    </location>
    <ligand>
        <name>Zn(2+)</name>
        <dbReference type="ChEBI" id="CHEBI:29105"/>
        <note>catalytic</note>
    </ligand>
</feature>
<feature type="binding site" evidence="1">
    <location>
        <position position="225"/>
    </location>
    <ligand>
        <name>Zn(2+)</name>
        <dbReference type="ChEBI" id="CHEBI:29105"/>
        <note>catalytic</note>
    </ligand>
</feature>
<feature type="binding site" evidence="1">
    <location>
        <position position="229"/>
    </location>
    <ligand>
        <name>substrate</name>
    </ligand>
</feature>
<feature type="binding site" evidence="1">
    <location>
        <position position="246"/>
    </location>
    <ligand>
        <name>Zn(2+)</name>
        <dbReference type="ChEBI" id="CHEBI:29105"/>
        <note>catalytic</note>
    </ligand>
</feature>
<reference key="1">
    <citation type="journal article" date="2004" name="J. Bacteriol.">
        <title>Complete genome sequence of the genetically tractable hydrogenotrophic methanogen Methanococcus maripaludis.</title>
        <authorList>
            <person name="Hendrickson E.L."/>
            <person name="Kaul R."/>
            <person name="Zhou Y."/>
            <person name="Bovee D."/>
            <person name="Chapman P."/>
            <person name="Chung J."/>
            <person name="Conway de Macario E."/>
            <person name="Dodsworth J.A."/>
            <person name="Gillett W."/>
            <person name="Graham D.E."/>
            <person name="Hackett M."/>
            <person name="Haydock A.K."/>
            <person name="Kang A."/>
            <person name="Land M.L."/>
            <person name="Levy R."/>
            <person name="Lie T.J."/>
            <person name="Major T.A."/>
            <person name="Moore B.C."/>
            <person name="Porat I."/>
            <person name="Palmeiri A."/>
            <person name="Rouse G."/>
            <person name="Saenphimmachak C."/>
            <person name="Soell D."/>
            <person name="Van Dien S."/>
            <person name="Wang T."/>
            <person name="Whitman W.B."/>
            <person name="Xia Q."/>
            <person name="Zhang Y."/>
            <person name="Larimer F.W."/>
            <person name="Olson M.V."/>
            <person name="Leigh J.A."/>
        </authorList>
    </citation>
    <scope>NUCLEOTIDE SEQUENCE [LARGE SCALE GENOMIC DNA]</scope>
    <source>
        <strain>DSM 14266 / JCM 13030 / NBRC 101832 / S2 / LL</strain>
    </source>
</reference>
<protein>
    <recommendedName>
        <fullName evidence="1">Glycerol-1-phosphate dehydrogenase [NAD(P)+]</fullName>
        <shortName evidence="1">G1P dehydrogenase</shortName>
        <shortName evidence="1">G1PDH</shortName>
        <ecNumber evidence="1">1.1.1.261</ecNumber>
    </recommendedName>
    <alternativeName>
        <fullName evidence="1">Enantiomeric glycerophosphate synthase</fullName>
    </alternativeName>
    <alternativeName>
        <fullName evidence="1">sn-glycerol-1-phosphate dehydrogenase</fullName>
    </alternativeName>
</protein>
<organism>
    <name type="scientific">Methanococcus maripaludis (strain DSM 14266 / JCM 13030 / NBRC 101832 / S2 / LL)</name>
    <dbReference type="NCBI Taxonomy" id="267377"/>
    <lineage>
        <taxon>Archaea</taxon>
        <taxon>Methanobacteriati</taxon>
        <taxon>Methanobacteriota</taxon>
        <taxon>Methanomada group</taxon>
        <taxon>Methanococci</taxon>
        <taxon>Methanococcales</taxon>
        <taxon>Methanococcaceae</taxon>
        <taxon>Methanococcus</taxon>
    </lineage>
</organism>
<evidence type="ECO:0000255" key="1">
    <source>
        <dbReference type="HAMAP-Rule" id="MF_00497"/>
    </source>
</evidence>
<gene>
    <name evidence="1" type="primary">egsA</name>
    <name type="ordered locus">MMP0225</name>
</gene>
<name>G1PDH_METMP</name>
<dbReference type="EC" id="1.1.1.261" evidence="1"/>
<dbReference type="EMBL" id="BX950229">
    <property type="protein sequence ID" value="CAF29781.1"/>
    <property type="molecule type" value="Genomic_DNA"/>
</dbReference>
<dbReference type="RefSeq" id="WP_011170169.1">
    <property type="nucleotide sequence ID" value="NC_005791.1"/>
</dbReference>
<dbReference type="SMR" id="Q6M0P4"/>
<dbReference type="STRING" id="267377.MMP0225"/>
<dbReference type="EnsemblBacteria" id="CAF29781">
    <property type="protein sequence ID" value="CAF29781"/>
    <property type="gene ID" value="MMP0225"/>
</dbReference>
<dbReference type="GeneID" id="2761192"/>
<dbReference type="KEGG" id="mmp:MMP0225"/>
<dbReference type="PATRIC" id="fig|267377.15.peg.227"/>
<dbReference type="eggNOG" id="arCOG00982">
    <property type="taxonomic scope" value="Archaea"/>
</dbReference>
<dbReference type="HOGENOM" id="CLU_038362_0_0_2"/>
<dbReference type="OrthoDB" id="8656at2157"/>
<dbReference type="UniPathway" id="UPA00940"/>
<dbReference type="Proteomes" id="UP000000590">
    <property type="component" value="Chromosome"/>
</dbReference>
<dbReference type="GO" id="GO:0005737">
    <property type="term" value="C:cytoplasm"/>
    <property type="evidence" value="ECO:0007669"/>
    <property type="project" value="UniProtKB-SubCell"/>
</dbReference>
<dbReference type="GO" id="GO:0106357">
    <property type="term" value="F:glycerol-1-phosphate dehydrogenase (NAD+) activity"/>
    <property type="evidence" value="ECO:0007669"/>
    <property type="project" value="RHEA"/>
</dbReference>
<dbReference type="GO" id="GO:0106358">
    <property type="term" value="F:glycerol-1-phosphate dehydrogenase (NADP+) activity"/>
    <property type="evidence" value="ECO:0007669"/>
    <property type="project" value="RHEA"/>
</dbReference>
<dbReference type="GO" id="GO:0046872">
    <property type="term" value="F:metal ion binding"/>
    <property type="evidence" value="ECO:0007669"/>
    <property type="project" value="UniProtKB-KW"/>
</dbReference>
<dbReference type="GO" id="GO:0006650">
    <property type="term" value="P:glycerophospholipid metabolic process"/>
    <property type="evidence" value="ECO:0007669"/>
    <property type="project" value="UniProtKB-UniRule"/>
</dbReference>
<dbReference type="GO" id="GO:0008654">
    <property type="term" value="P:phospholipid biosynthetic process"/>
    <property type="evidence" value="ECO:0007669"/>
    <property type="project" value="UniProtKB-KW"/>
</dbReference>
<dbReference type="Gene3D" id="3.40.50.1970">
    <property type="match status" value="1"/>
</dbReference>
<dbReference type="Gene3D" id="1.20.1090.10">
    <property type="entry name" value="Dehydroquinate synthase-like - alpha domain"/>
    <property type="match status" value="1"/>
</dbReference>
<dbReference type="HAMAP" id="MF_00497_A">
    <property type="entry name" value="G1P_dehydrogenase_A"/>
    <property type="match status" value="1"/>
</dbReference>
<dbReference type="InterPro" id="IPR023002">
    <property type="entry name" value="G1P_dehydrogenase_arc"/>
</dbReference>
<dbReference type="InterPro" id="IPR032837">
    <property type="entry name" value="G1PDH"/>
</dbReference>
<dbReference type="InterPro" id="IPR016205">
    <property type="entry name" value="Glycerol_DH"/>
</dbReference>
<dbReference type="PANTHER" id="PTHR43616">
    <property type="entry name" value="GLYCEROL DEHYDROGENASE"/>
    <property type="match status" value="1"/>
</dbReference>
<dbReference type="PANTHER" id="PTHR43616:SF5">
    <property type="entry name" value="GLYCEROL DEHYDROGENASE 1"/>
    <property type="match status" value="1"/>
</dbReference>
<dbReference type="Pfam" id="PF13685">
    <property type="entry name" value="Fe-ADH_2"/>
    <property type="match status" value="1"/>
</dbReference>
<dbReference type="PIRSF" id="PIRSF000112">
    <property type="entry name" value="Glycerol_dehydrogenase"/>
    <property type="match status" value="1"/>
</dbReference>
<dbReference type="SUPFAM" id="SSF56796">
    <property type="entry name" value="Dehydroquinate synthase-like"/>
    <property type="match status" value="1"/>
</dbReference>
<comment type="function">
    <text evidence="1">Catalyzes the NAD(P)H-dependent reduction of dihydroxyacetonephosphate (DHAP or glycerone phosphate) to glycerol 1-phosphate (G1P). The G1P thus generated is used as the glycerophosphate backbone of phospholipids in the cellular membranes of Archaea.</text>
</comment>
<comment type="catalytic activity">
    <reaction evidence="1">
        <text>sn-glycerol 1-phosphate + NAD(+) = dihydroxyacetone phosphate + NADH + H(+)</text>
        <dbReference type="Rhea" id="RHEA:21412"/>
        <dbReference type="ChEBI" id="CHEBI:15378"/>
        <dbReference type="ChEBI" id="CHEBI:57540"/>
        <dbReference type="ChEBI" id="CHEBI:57642"/>
        <dbReference type="ChEBI" id="CHEBI:57685"/>
        <dbReference type="ChEBI" id="CHEBI:57945"/>
        <dbReference type="EC" id="1.1.1.261"/>
    </reaction>
</comment>
<comment type="catalytic activity">
    <reaction evidence="1">
        <text>sn-glycerol 1-phosphate + NADP(+) = dihydroxyacetone phosphate + NADPH + H(+)</text>
        <dbReference type="Rhea" id="RHEA:21416"/>
        <dbReference type="ChEBI" id="CHEBI:15378"/>
        <dbReference type="ChEBI" id="CHEBI:57642"/>
        <dbReference type="ChEBI" id="CHEBI:57685"/>
        <dbReference type="ChEBI" id="CHEBI:57783"/>
        <dbReference type="ChEBI" id="CHEBI:58349"/>
        <dbReference type="EC" id="1.1.1.261"/>
    </reaction>
</comment>
<comment type="cofactor">
    <cofactor evidence="1">
        <name>Zn(2+)</name>
        <dbReference type="ChEBI" id="CHEBI:29105"/>
    </cofactor>
    <text evidence="1">Binds 1 zinc ion per subunit.</text>
</comment>
<comment type="pathway">
    <text evidence="1">Membrane lipid metabolism; glycerophospholipid metabolism.</text>
</comment>
<comment type="subcellular location">
    <subcellularLocation>
        <location evidence="1">Cytoplasm</location>
    </subcellularLocation>
</comment>
<comment type="similarity">
    <text evidence="1">Belongs to the glycerol-1-phosphate dehydrogenase family.</text>
</comment>
<sequence>MIVIPRYTIIKEKASFRIQEILDNLNLKNPLVITGKNTQKYNKDFDFIYYDEIETSDLENIKNYANDYDSVIGIGGGRPIDIGKLIAHKSKKPFLSVPTTASNDGIASPIVSLTQPSYMTEAPIAIIADIDIIKKSPKKLLSAGMGDIVSNITAVLDWELGKIEKSEKYSDSSGIFSKTIAIELMDYVLNSNLEEYPKKLVKALIGSGISIAIAHSSRPASGSEHLFSHALDTMKEKYSIDTNSLHGEQCGVGTLATAQIYLEEGKLEVETFEMLKTSLKVVDAPVTAKQLGFDEEIVIEALSSAHALRNRHTILRNGISKEKAREILEKSEII</sequence>